<sequence>MTSILTPRQAEELHKAIIAYLSANNLSSSATALRTELGLAEDVFDAATAKKYEGLIEKKWTSVVRLQKKIMDLESRNNALQSELDNATPLSLAKRNTDPTAWLPAPRPRYSLESHQNTINCIAFHPVYSSIASGSDDCTIKIWDWELGELERTIKSHTRPVLDVDFGGPRGGILLASCSSDLTIKLWDPSDDYKNIRTLPGHDHSVSAIRFMPSGASGAAMSGNLLVSASRDMTLKIWDVSTGFCLKTIRGHTAWIRDVYPSLDGRYLLSTGDDSTVRLWDLSVTNPENRLTMIGHDHYIECCALAPPSSYPFLSRLAGLKKPPAATSTAEFMASGSRDKTIKLWDARGTLLKTLIGHDNWVRALVFHPGGRYLLSVSDDKTLRCWDLEQDGKCVKTIGDVHERFVTCLRWAPGVVMDAPAEADGQSNGTPRKKTEAAPAVRIRCVIATGSVDMKLRIFAN</sequence>
<organism>
    <name type="scientific">Pyricularia oryzae (strain 70-15 / ATCC MYA-4617 / FGSC 8958)</name>
    <name type="common">Rice blast fungus</name>
    <name type="synonym">Magnaporthe oryzae</name>
    <dbReference type="NCBI Taxonomy" id="242507"/>
    <lineage>
        <taxon>Eukaryota</taxon>
        <taxon>Fungi</taxon>
        <taxon>Dikarya</taxon>
        <taxon>Ascomycota</taxon>
        <taxon>Pezizomycotina</taxon>
        <taxon>Sordariomycetes</taxon>
        <taxon>Sordariomycetidae</taxon>
        <taxon>Magnaporthales</taxon>
        <taxon>Pyriculariaceae</taxon>
        <taxon>Pyricularia</taxon>
    </lineage>
</organism>
<comment type="function">
    <text evidence="1">Positively regulates the activity of the minus-end directed microtubule motor protein dynein. May enhance dynein-mediated microtubule sliding by targeting dynein to the microtubule plus end. Required for nuclear migration during vegetative growth as well as development. Required for retrograde early endosome (EE) transport from the hyphal tip. Required for localization of dynein to the mitotic spindle poles. Recruits additional proteins to the dynein complex at SPBs.</text>
</comment>
<comment type="subunit">
    <text evidence="1">Self-associates. Interacts with NDL1 and dynein.</text>
</comment>
<comment type="subcellular location">
    <subcellularLocation>
        <location evidence="1">Cytoplasm</location>
        <location evidence="1">Cytoskeleton</location>
    </subcellularLocation>
    <subcellularLocation>
        <location evidence="1">Cytoplasm</location>
        <location evidence="1">Cytoskeleton</location>
        <location evidence="1">Spindle pole</location>
    </subcellularLocation>
    <text evidence="1">Localizes to the plus ends of microtubules at the hyphal tip and the mitotic spindle poles.</text>
</comment>
<comment type="domain">
    <text evidence="1">Dimerization mediated by the LisH domain may be required to activate dynein.</text>
</comment>
<comment type="similarity">
    <text evidence="1">Belongs to the WD repeat LIS1/nudF family.</text>
</comment>
<dbReference type="EMBL" id="CM001236">
    <property type="protein sequence ID" value="EHA47884.1"/>
    <property type="molecule type" value="Genomic_DNA"/>
</dbReference>
<dbReference type="RefSeq" id="XP_003720251.1">
    <property type="nucleotide sequence ID" value="XM_003720203.1"/>
</dbReference>
<dbReference type="SMR" id="A4R3M4"/>
<dbReference type="FunCoup" id="A4R3M4">
    <property type="interactions" value="48"/>
</dbReference>
<dbReference type="STRING" id="242507.A4R3M4"/>
<dbReference type="EnsemblFungi" id="MGG_09369T0">
    <property type="protein sequence ID" value="MGG_09369T0"/>
    <property type="gene ID" value="MGG_09369"/>
</dbReference>
<dbReference type="GeneID" id="2680413"/>
<dbReference type="KEGG" id="mgr:MGG_09369"/>
<dbReference type="VEuPathDB" id="FungiDB:MGG_09369"/>
<dbReference type="eggNOG" id="KOG0295">
    <property type="taxonomic scope" value="Eukaryota"/>
</dbReference>
<dbReference type="HOGENOM" id="CLU_000288_57_15_1"/>
<dbReference type="InParanoid" id="A4R3M4"/>
<dbReference type="OMA" id="RGTCLMT"/>
<dbReference type="OrthoDB" id="10264588at2759"/>
<dbReference type="Proteomes" id="UP000009058">
    <property type="component" value="Chromosome 6"/>
</dbReference>
<dbReference type="GO" id="GO:0005737">
    <property type="term" value="C:cytoplasm"/>
    <property type="evidence" value="ECO:0007669"/>
    <property type="project" value="UniProtKB-UniRule"/>
</dbReference>
<dbReference type="GO" id="GO:0005874">
    <property type="term" value="C:microtubule"/>
    <property type="evidence" value="ECO:0007669"/>
    <property type="project" value="UniProtKB-KW"/>
</dbReference>
<dbReference type="GO" id="GO:0005875">
    <property type="term" value="C:microtubule associated complex"/>
    <property type="evidence" value="ECO:0007669"/>
    <property type="project" value="UniProtKB-UniRule"/>
</dbReference>
<dbReference type="GO" id="GO:0000922">
    <property type="term" value="C:spindle pole"/>
    <property type="evidence" value="ECO:0007669"/>
    <property type="project" value="UniProtKB-SubCell"/>
</dbReference>
<dbReference type="GO" id="GO:1990234">
    <property type="term" value="C:transferase complex"/>
    <property type="evidence" value="ECO:0007669"/>
    <property type="project" value="UniProtKB-ARBA"/>
</dbReference>
<dbReference type="GO" id="GO:0070840">
    <property type="term" value="F:dynein complex binding"/>
    <property type="evidence" value="ECO:0007669"/>
    <property type="project" value="UniProtKB-UniRule"/>
</dbReference>
<dbReference type="GO" id="GO:0051301">
    <property type="term" value="P:cell division"/>
    <property type="evidence" value="ECO:0007669"/>
    <property type="project" value="UniProtKB-KW"/>
</dbReference>
<dbReference type="GO" id="GO:0000132">
    <property type="term" value="P:establishment of mitotic spindle orientation"/>
    <property type="evidence" value="ECO:0007669"/>
    <property type="project" value="UniProtKB-UniRule"/>
</dbReference>
<dbReference type="GO" id="GO:0051012">
    <property type="term" value="P:microtubule sliding"/>
    <property type="evidence" value="ECO:0007669"/>
    <property type="project" value="UniProtKB-UniRule"/>
</dbReference>
<dbReference type="CDD" id="cd00200">
    <property type="entry name" value="WD40"/>
    <property type="match status" value="1"/>
</dbReference>
<dbReference type="FunFam" id="2.130.10.10:FF:000342">
    <property type="entry name" value="Nuclear distribution protein PAC1"/>
    <property type="match status" value="1"/>
</dbReference>
<dbReference type="FunFam" id="1.20.960.30:FF:000002">
    <property type="entry name" value="Platelet-activating factor acetylhydrolase ib"/>
    <property type="match status" value="1"/>
</dbReference>
<dbReference type="Gene3D" id="1.20.960.30">
    <property type="match status" value="1"/>
</dbReference>
<dbReference type="Gene3D" id="2.130.10.10">
    <property type="entry name" value="YVTN repeat-like/Quinoprotein amine dehydrogenase"/>
    <property type="match status" value="1"/>
</dbReference>
<dbReference type="HAMAP" id="MF_03141">
    <property type="entry name" value="lis1"/>
    <property type="match status" value="1"/>
</dbReference>
<dbReference type="InterPro" id="IPR017252">
    <property type="entry name" value="Dynein_regulator_LIS1"/>
</dbReference>
<dbReference type="InterPro" id="IPR020472">
    <property type="entry name" value="G-protein_beta_WD-40_rep"/>
</dbReference>
<dbReference type="InterPro" id="IPR037190">
    <property type="entry name" value="LIS1_N"/>
</dbReference>
<dbReference type="InterPro" id="IPR006594">
    <property type="entry name" value="LisH"/>
</dbReference>
<dbReference type="InterPro" id="IPR056795">
    <property type="entry name" value="PAC1-like_LisH-like_dom"/>
</dbReference>
<dbReference type="InterPro" id="IPR015943">
    <property type="entry name" value="WD40/YVTN_repeat-like_dom_sf"/>
</dbReference>
<dbReference type="InterPro" id="IPR019775">
    <property type="entry name" value="WD40_repeat_CS"/>
</dbReference>
<dbReference type="InterPro" id="IPR036322">
    <property type="entry name" value="WD40_repeat_dom_sf"/>
</dbReference>
<dbReference type="InterPro" id="IPR001680">
    <property type="entry name" value="WD40_rpt"/>
</dbReference>
<dbReference type="PANTHER" id="PTHR22847:SF637">
    <property type="entry name" value="WD REPEAT DOMAIN 5B"/>
    <property type="match status" value="1"/>
</dbReference>
<dbReference type="PANTHER" id="PTHR22847">
    <property type="entry name" value="WD40 REPEAT PROTEIN"/>
    <property type="match status" value="1"/>
</dbReference>
<dbReference type="Pfam" id="PF24951">
    <property type="entry name" value="LisH_PAC1"/>
    <property type="match status" value="1"/>
</dbReference>
<dbReference type="Pfam" id="PF00400">
    <property type="entry name" value="WD40"/>
    <property type="match status" value="6"/>
</dbReference>
<dbReference type="PIRSF" id="PIRSF037647">
    <property type="entry name" value="Dynein_regulator_Lis1"/>
    <property type="match status" value="1"/>
</dbReference>
<dbReference type="PRINTS" id="PR00320">
    <property type="entry name" value="GPROTEINBRPT"/>
</dbReference>
<dbReference type="SMART" id="SM00320">
    <property type="entry name" value="WD40"/>
    <property type="match status" value="7"/>
</dbReference>
<dbReference type="SUPFAM" id="SSF109925">
    <property type="entry name" value="Lissencephaly-1 protein (Lis-1, PAF-AH alpha) N-terminal domain"/>
    <property type="match status" value="1"/>
</dbReference>
<dbReference type="SUPFAM" id="SSF50978">
    <property type="entry name" value="WD40 repeat-like"/>
    <property type="match status" value="1"/>
</dbReference>
<dbReference type="PROSITE" id="PS50896">
    <property type="entry name" value="LISH"/>
    <property type="match status" value="1"/>
</dbReference>
<dbReference type="PROSITE" id="PS00678">
    <property type="entry name" value="WD_REPEATS_1"/>
    <property type="match status" value="3"/>
</dbReference>
<dbReference type="PROSITE" id="PS50082">
    <property type="entry name" value="WD_REPEATS_2"/>
    <property type="match status" value="6"/>
</dbReference>
<dbReference type="PROSITE" id="PS50294">
    <property type="entry name" value="WD_REPEATS_REGION"/>
    <property type="match status" value="1"/>
</dbReference>
<name>LIS1_PYRO7</name>
<evidence type="ECO:0000255" key="1">
    <source>
        <dbReference type="HAMAP-Rule" id="MF_03141"/>
    </source>
</evidence>
<gene>
    <name evidence="1" type="primary">PAC1</name>
    <name evidence="1" type="synonym">LIS1</name>
    <name type="ORF">MGG_09369</name>
</gene>
<protein>
    <recommendedName>
        <fullName evidence="1">Nuclear distribution protein PAC1</fullName>
    </recommendedName>
    <alternativeName>
        <fullName evidence="1">Lissencephaly-1 homolog</fullName>
        <shortName evidence="1">LIS-1</shortName>
    </alternativeName>
    <alternativeName>
        <fullName evidence="1">nudF homolog</fullName>
    </alternativeName>
</protein>
<proteinExistence type="inferred from homology"/>
<feature type="chain" id="PRO_0000405082" description="Nuclear distribution protein PAC1">
    <location>
        <begin position="1"/>
        <end position="461"/>
    </location>
</feature>
<feature type="domain" description="LisH" evidence="1">
    <location>
        <begin position="9"/>
        <end position="41"/>
    </location>
</feature>
<feature type="repeat" description="WD 1">
    <location>
        <begin position="114"/>
        <end position="155"/>
    </location>
</feature>
<feature type="repeat" description="WD 2">
    <location>
        <begin position="157"/>
        <end position="197"/>
    </location>
</feature>
<feature type="repeat" description="WD 3">
    <location>
        <begin position="201"/>
        <end position="248"/>
    </location>
</feature>
<feature type="repeat" description="WD 4">
    <location>
        <begin position="251"/>
        <end position="290"/>
    </location>
</feature>
<feature type="repeat" description="WD 5">
    <location>
        <begin position="295"/>
        <end position="355"/>
    </location>
</feature>
<feature type="repeat" description="WD 6">
    <location>
        <begin position="357"/>
        <end position="396"/>
    </location>
</feature>
<feature type="repeat" description="WD 7">
    <location>
        <begin position="401"/>
        <end position="444"/>
    </location>
</feature>
<feature type="repeat" description="WD 8">
    <location>
        <begin position="446"/>
        <end position="461"/>
    </location>
</feature>
<feature type="coiled-coil region" evidence="1">
    <location>
        <begin position="61"/>
        <end position="88"/>
    </location>
</feature>
<reference key="1">
    <citation type="journal article" date="2005" name="Nature">
        <title>The genome sequence of the rice blast fungus Magnaporthe grisea.</title>
        <authorList>
            <person name="Dean R.A."/>
            <person name="Talbot N.J."/>
            <person name="Ebbole D.J."/>
            <person name="Farman M.L."/>
            <person name="Mitchell T.K."/>
            <person name="Orbach M.J."/>
            <person name="Thon M.R."/>
            <person name="Kulkarni R."/>
            <person name="Xu J.-R."/>
            <person name="Pan H."/>
            <person name="Read N.D."/>
            <person name="Lee Y.-H."/>
            <person name="Carbone I."/>
            <person name="Brown D."/>
            <person name="Oh Y.Y."/>
            <person name="Donofrio N."/>
            <person name="Jeong J.S."/>
            <person name="Soanes D.M."/>
            <person name="Djonovic S."/>
            <person name="Kolomiets E."/>
            <person name="Rehmeyer C."/>
            <person name="Li W."/>
            <person name="Harding M."/>
            <person name="Kim S."/>
            <person name="Lebrun M.-H."/>
            <person name="Bohnert H."/>
            <person name="Coughlan S."/>
            <person name="Butler J."/>
            <person name="Calvo S.E."/>
            <person name="Ma L.-J."/>
            <person name="Nicol R."/>
            <person name="Purcell S."/>
            <person name="Nusbaum C."/>
            <person name="Galagan J.E."/>
            <person name="Birren B.W."/>
        </authorList>
    </citation>
    <scope>NUCLEOTIDE SEQUENCE [LARGE SCALE GENOMIC DNA]</scope>
    <source>
        <strain>70-15 / ATCC MYA-4617 / FGSC 8958</strain>
    </source>
</reference>
<accession>A4R3M4</accession>
<accession>G4NI24</accession>
<keyword id="KW-0131">Cell cycle</keyword>
<keyword id="KW-0132">Cell division</keyword>
<keyword id="KW-0175">Coiled coil</keyword>
<keyword id="KW-0963">Cytoplasm</keyword>
<keyword id="KW-0206">Cytoskeleton</keyword>
<keyword id="KW-0493">Microtubule</keyword>
<keyword id="KW-0498">Mitosis</keyword>
<keyword id="KW-1185">Reference proteome</keyword>
<keyword id="KW-0677">Repeat</keyword>
<keyword id="KW-0813">Transport</keyword>
<keyword id="KW-0853">WD repeat</keyword>